<protein>
    <recommendedName>
        <fullName>Probable transport protein</fullName>
        <shortName>LTP</shortName>
    </recommendedName>
</protein>
<gene>
    <name type="primary">PRO-1</name>
</gene>
<accession>P13865</accession>
<proteinExistence type="evidence at transcript level"/>
<organism>
    <name type="scientific">Leishmania enriettii</name>
    <dbReference type="NCBI Taxonomy" id="5663"/>
    <lineage>
        <taxon>Eukaryota</taxon>
        <taxon>Discoba</taxon>
        <taxon>Euglenozoa</taxon>
        <taxon>Kinetoplastea</taxon>
        <taxon>Metakinetoplastina</taxon>
        <taxon>Trypanosomatida</taxon>
        <taxon>Trypanosomatidae</taxon>
        <taxon>Leishmaniinae</taxon>
        <taxon>Leishmania</taxon>
    </lineage>
</organism>
<reference key="1">
    <citation type="journal article" date="1989" name="Proc. Natl. Acad. Sci. U.S.A.">
        <title>Developmentally regulated gene from Leishmania encodes a putative membrane transport protein.</title>
        <authorList>
            <person name="Cairns B.R."/>
            <person name="Collard M.W."/>
            <person name="Landfear S.M."/>
        </authorList>
    </citation>
    <scope>NUCLEOTIDE SEQUENCE [GENOMIC DNA]</scope>
</reference>
<name>PRO1_LEIEN</name>
<dbReference type="EMBL" id="M26229">
    <property type="protein sequence ID" value="AAA29256.1"/>
    <property type="molecule type" value="Genomic_DNA"/>
</dbReference>
<dbReference type="PIR" id="A33974">
    <property type="entry name" value="A33974"/>
</dbReference>
<dbReference type="SMR" id="P13865"/>
<dbReference type="VEuPathDB" id="TriTrypDB:CUR178_00672"/>
<dbReference type="VEuPathDB" id="TriTrypDB:LENLEM3045_360073900"/>
<dbReference type="GO" id="GO:0016020">
    <property type="term" value="C:membrane"/>
    <property type="evidence" value="ECO:0007669"/>
    <property type="project" value="UniProtKB-SubCell"/>
</dbReference>
<dbReference type="GO" id="GO:0015144">
    <property type="term" value="F:carbohydrate transmembrane transporter activity"/>
    <property type="evidence" value="ECO:0007669"/>
    <property type="project" value="InterPro"/>
</dbReference>
<dbReference type="CDD" id="cd17315">
    <property type="entry name" value="MFS_GLUT_like"/>
    <property type="match status" value="1"/>
</dbReference>
<dbReference type="FunFam" id="1.20.1250.20:FF:000357">
    <property type="entry name" value="Glucose transporter, lmgt1"/>
    <property type="match status" value="1"/>
</dbReference>
<dbReference type="Gene3D" id="1.20.1250.20">
    <property type="entry name" value="MFS general substrate transporter like domains"/>
    <property type="match status" value="2"/>
</dbReference>
<dbReference type="InterPro" id="IPR020846">
    <property type="entry name" value="MFS_dom"/>
</dbReference>
<dbReference type="InterPro" id="IPR005828">
    <property type="entry name" value="MFS_sugar_transport-like"/>
</dbReference>
<dbReference type="InterPro" id="IPR036259">
    <property type="entry name" value="MFS_trans_sf"/>
</dbReference>
<dbReference type="InterPro" id="IPR045262">
    <property type="entry name" value="STP/PLT_plant"/>
</dbReference>
<dbReference type="InterPro" id="IPR003663">
    <property type="entry name" value="Sugar/inositol_transpt"/>
</dbReference>
<dbReference type="InterPro" id="IPR005829">
    <property type="entry name" value="Sugar_transporter_CS"/>
</dbReference>
<dbReference type="NCBIfam" id="TIGR00879">
    <property type="entry name" value="SP"/>
    <property type="match status" value="1"/>
</dbReference>
<dbReference type="PANTHER" id="PTHR23500:SF357">
    <property type="entry name" value="IP12678P"/>
    <property type="match status" value="1"/>
</dbReference>
<dbReference type="PANTHER" id="PTHR23500">
    <property type="entry name" value="SOLUTE CARRIER FAMILY 2, FACILITATED GLUCOSE TRANSPORTER"/>
    <property type="match status" value="1"/>
</dbReference>
<dbReference type="Pfam" id="PF00083">
    <property type="entry name" value="Sugar_tr"/>
    <property type="match status" value="2"/>
</dbReference>
<dbReference type="PRINTS" id="PR00171">
    <property type="entry name" value="SUGRTRNSPORT"/>
</dbReference>
<dbReference type="SUPFAM" id="SSF103473">
    <property type="entry name" value="MFS general substrate transporter"/>
    <property type="match status" value="1"/>
</dbReference>
<dbReference type="PROSITE" id="PS50850">
    <property type="entry name" value="MFS"/>
    <property type="match status" value="1"/>
</dbReference>
<dbReference type="PROSITE" id="PS00217">
    <property type="entry name" value="SUGAR_TRANSPORT_2"/>
    <property type="match status" value="1"/>
</dbReference>
<comment type="function">
    <text>Probable membrane transport protein.</text>
</comment>
<comment type="subcellular location">
    <subcellularLocation>
        <location>Membrane</location>
        <topology>Multi-pass membrane protein</topology>
    </subcellularLocation>
</comment>
<comment type="developmental stage">
    <text>Predominantly found in promastigotes.</text>
</comment>
<comment type="similarity">
    <text evidence="3">Belongs to the major facilitator superfamily. Sugar transporter (TC 2.A.1.1) family.</text>
</comment>
<sequence length="567" mass="61451">MSDRVEVNERRSDSVSEKEPARDDARKDVTDDQEDAPPFMTANNARVMLVQAIGGSLNGYSIGFVGVYSTLFGYSTNCASFLQENSCTTVPNADCKWFVSPTGSSYCGWPEVTCRKEYAYSSPAEMPGALARCEADSRCRWSYSDEECQNPSGYSSSESGIFAGSMIAGCLIGSVFAGPLASKIGARLSFLLVGLVGVVASVMYHASCAADEFWVLIVGRFVIGLFLGVICVACPVYTDQNAHPKWKRTIGVMFQVFTTLGIFVAALMGLALGQSIRFDHDGDQKVMARMQGLCVFSTLFSLLTVVLGIVTRESRAKFDGGEEGRAELNPSEYGYVEMIPRLLMGCVMAGTLQLTGINAVMNYAPTIMGSLGLAPLVGNFVVMLWNFVTTLASIPLSYVFTMRHVFLFGSIFTSCMCLFMCGIPVYPGVSKKLEAKNGVAITGILLFILGFEVCVGPCYYVLTQDMFPPSFRPRGASFTQVAQFIFNLIINVCYPIATESISGGPSGNQDKGQAVAFIFFGGLGLICFVIQVFFLHPWDEERDGKKVVAPAIGKKELSEESIGNRAE</sequence>
<evidence type="ECO:0000255" key="1"/>
<evidence type="ECO:0000256" key="2">
    <source>
        <dbReference type="SAM" id="MobiDB-lite"/>
    </source>
</evidence>
<evidence type="ECO:0000305" key="3"/>
<feature type="chain" id="PRO_0000050450" description="Probable transport protein">
    <location>
        <begin position="1"/>
        <end position="567"/>
    </location>
</feature>
<feature type="topological domain" description="Cytoplasmic" evidence="1">
    <location>
        <begin position="1"/>
        <end position="46"/>
    </location>
</feature>
<feature type="transmembrane region" description="Helical; Name=1" evidence="1">
    <location>
        <begin position="47"/>
        <end position="67"/>
    </location>
</feature>
<feature type="topological domain" description="Extracellular" evidence="1">
    <location>
        <begin position="68"/>
        <end position="160"/>
    </location>
</feature>
<feature type="transmembrane region" description="Helical; Name=2" evidence="1">
    <location>
        <begin position="161"/>
        <end position="181"/>
    </location>
</feature>
<feature type="topological domain" description="Cytoplasmic" evidence="1">
    <location>
        <begin position="182"/>
        <end position="189"/>
    </location>
</feature>
<feature type="transmembrane region" description="Helical; Name=3" evidence="1">
    <location>
        <begin position="190"/>
        <end position="210"/>
    </location>
</feature>
<feature type="topological domain" description="Extracellular" evidence="1">
    <location>
        <begin position="211"/>
        <end position="212"/>
    </location>
</feature>
<feature type="transmembrane region" description="Helical; Name=4" evidence="1">
    <location>
        <begin position="213"/>
        <end position="233"/>
    </location>
</feature>
<feature type="topological domain" description="Cytoplasmic" evidence="1">
    <location>
        <begin position="234"/>
        <end position="249"/>
    </location>
</feature>
<feature type="transmembrane region" description="Helical; Name=5" evidence="1">
    <location>
        <begin position="250"/>
        <end position="270"/>
    </location>
</feature>
<feature type="topological domain" description="Extracellular" evidence="1">
    <location>
        <begin position="271"/>
        <end position="289"/>
    </location>
</feature>
<feature type="transmembrane region" description="Helical; Name=6" evidence="1">
    <location>
        <begin position="290"/>
        <end position="310"/>
    </location>
</feature>
<feature type="topological domain" description="Cytoplasmic" evidence="1">
    <location>
        <begin position="311"/>
        <end position="341"/>
    </location>
</feature>
<feature type="transmembrane region" description="Helical; Name=7" evidence="1">
    <location>
        <begin position="342"/>
        <end position="362"/>
    </location>
</feature>
<feature type="topological domain" description="Extracellular" evidence="1">
    <location>
        <begin position="363"/>
        <end position="366"/>
    </location>
</feature>
<feature type="transmembrane region" description="Helical; Name=8" evidence="1">
    <location>
        <begin position="367"/>
        <end position="387"/>
    </location>
</feature>
<feature type="topological domain" description="Cytoplasmic" evidence="1">
    <location>
        <begin position="388"/>
        <end position="404"/>
    </location>
</feature>
<feature type="transmembrane region" description="Helical; Name=9" evidence="1">
    <location>
        <begin position="405"/>
        <end position="425"/>
    </location>
</feature>
<feature type="topological domain" description="Extracellular" evidence="1">
    <location>
        <begin position="426"/>
        <end position="437"/>
    </location>
</feature>
<feature type="transmembrane region" description="Helical; Name=10" evidence="1">
    <location>
        <begin position="438"/>
        <end position="458"/>
    </location>
</feature>
<feature type="topological domain" description="Cytoplasmic" evidence="1">
    <location>
        <begin position="459"/>
        <end position="480"/>
    </location>
</feature>
<feature type="transmembrane region" description="Helical; Name=11" evidence="1">
    <location>
        <begin position="481"/>
        <end position="501"/>
    </location>
</feature>
<feature type="topological domain" description="Extracellular" evidence="1">
    <location>
        <begin position="502"/>
        <end position="514"/>
    </location>
</feature>
<feature type="transmembrane region" description="Helical; Name=12" evidence="1">
    <location>
        <begin position="515"/>
        <end position="535"/>
    </location>
</feature>
<feature type="topological domain" description="Cytoplasmic" evidence="1">
    <location>
        <begin position="536"/>
        <end position="567"/>
    </location>
</feature>
<feature type="region of interest" description="Disordered" evidence="2">
    <location>
        <begin position="1"/>
        <end position="38"/>
    </location>
</feature>
<feature type="compositionally biased region" description="Basic and acidic residues" evidence="2">
    <location>
        <begin position="1"/>
        <end position="30"/>
    </location>
</feature>
<keyword id="KW-0472">Membrane</keyword>
<keyword id="KW-0762">Sugar transport</keyword>
<keyword id="KW-0812">Transmembrane</keyword>
<keyword id="KW-1133">Transmembrane helix</keyword>
<keyword id="KW-0813">Transport</keyword>